<accession>A4WFC7</accession>
<feature type="chain" id="PRO_1000067594" description="Large ribosomal subunit protein uL4">
    <location>
        <begin position="1"/>
        <end position="201"/>
    </location>
</feature>
<feature type="region of interest" description="Disordered" evidence="2">
    <location>
        <begin position="44"/>
        <end position="71"/>
    </location>
</feature>
<sequence>MELVLKDAQSALTVSETTFGRDFNEALVHQVVVAYAAGARQGTRAQKTRAEVTGSGKKPWRQKGTGRARSGSIKSPIWRSGGVTFAARPQDHSQKVNKKMYRGALKSILSELVRQDRLIVVETFSVEAPKTKLLAQKLKDMALEDVLIITGELDENLFLAARNLHKVDVRDATGIDPVSLIAFDKVVMTADAVKQVEEMLA</sequence>
<proteinExistence type="inferred from homology"/>
<protein>
    <recommendedName>
        <fullName evidence="1">Large ribosomal subunit protein uL4</fullName>
    </recommendedName>
    <alternativeName>
        <fullName evidence="3">50S ribosomal protein L4</fullName>
    </alternativeName>
</protein>
<comment type="function">
    <text evidence="1">One of the primary rRNA binding proteins, this protein initially binds near the 5'-end of the 23S rRNA. It is important during the early stages of 50S assembly. It makes multiple contacts with different domains of the 23S rRNA in the assembled 50S subunit and ribosome.</text>
</comment>
<comment type="function">
    <text evidence="1">Forms part of the polypeptide exit tunnel.</text>
</comment>
<comment type="subunit">
    <text evidence="1">Part of the 50S ribosomal subunit.</text>
</comment>
<comment type="similarity">
    <text evidence="1">Belongs to the universal ribosomal protein uL4 family.</text>
</comment>
<keyword id="KW-0687">Ribonucleoprotein</keyword>
<keyword id="KW-0689">Ribosomal protein</keyword>
<keyword id="KW-0694">RNA-binding</keyword>
<keyword id="KW-0699">rRNA-binding</keyword>
<gene>
    <name evidence="1" type="primary">rplD</name>
    <name type="ordered locus">Ent638_3750</name>
</gene>
<reference key="1">
    <citation type="journal article" date="2010" name="PLoS Genet.">
        <title>Genome sequence of the plant growth promoting endophytic bacterium Enterobacter sp. 638.</title>
        <authorList>
            <person name="Taghavi S."/>
            <person name="van der Lelie D."/>
            <person name="Hoffman A."/>
            <person name="Zhang Y.B."/>
            <person name="Walla M.D."/>
            <person name="Vangronsveld J."/>
            <person name="Newman L."/>
            <person name="Monchy S."/>
        </authorList>
    </citation>
    <scope>NUCLEOTIDE SEQUENCE [LARGE SCALE GENOMIC DNA]</scope>
    <source>
        <strain>638</strain>
    </source>
</reference>
<dbReference type="EMBL" id="CP000653">
    <property type="protein sequence ID" value="ABP62407.1"/>
    <property type="molecule type" value="Genomic_DNA"/>
</dbReference>
<dbReference type="RefSeq" id="WP_015960716.1">
    <property type="nucleotide sequence ID" value="NC_009436.1"/>
</dbReference>
<dbReference type="SMR" id="A4WFC7"/>
<dbReference type="STRING" id="399742.Ent638_3750"/>
<dbReference type="GeneID" id="97603668"/>
<dbReference type="KEGG" id="ent:Ent638_3750"/>
<dbReference type="eggNOG" id="COG0088">
    <property type="taxonomic scope" value="Bacteria"/>
</dbReference>
<dbReference type="HOGENOM" id="CLU_041575_5_2_6"/>
<dbReference type="OrthoDB" id="9803201at2"/>
<dbReference type="Proteomes" id="UP000000230">
    <property type="component" value="Chromosome"/>
</dbReference>
<dbReference type="GO" id="GO:1990904">
    <property type="term" value="C:ribonucleoprotein complex"/>
    <property type="evidence" value="ECO:0007669"/>
    <property type="project" value="UniProtKB-KW"/>
</dbReference>
<dbReference type="GO" id="GO:0005840">
    <property type="term" value="C:ribosome"/>
    <property type="evidence" value="ECO:0007669"/>
    <property type="project" value="UniProtKB-KW"/>
</dbReference>
<dbReference type="GO" id="GO:0019843">
    <property type="term" value="F:rRNA binding"/>
    <property type="evidence" value="ECO:0007669"/>
    <property type="project" value="UniProtKB-UniRule"/>
</dbReference>
<dbReference type="GO" id="GO:0003735">
    <property type="term" value="F:structural constituent of ribosome"/>
    <property type="evidence" value="ECO:0007669"/>
    <property type="project" value="InterPro"/>
</dbReference>
<dbReference type="GO" id="GO:0006412">
    <property type="term" value="P:translation"/>
    <property type="evidence" value="ECO:0007669"/>
    <property type="project" value="UniProtKB-UniRule"/>
</dbReference>
<dbReference type="FunFam" id="3.40.1370.10:FF:000001">
    <property type="entry name" value="50S ribosomal protein L4"/>
    <property type="match status" value="1"/>
</dbReference>
<dbReference type="Gene3D" id="3.40.1370.10">
    <property type="match status" value="1"/>
</dbReference>
<dbReference type="HAMAP" id="MF_01328_B">
    <property type="entry name" value="Ribosomal_uL4_B"/>
    <property type="match status" value="1"/>
</dbReference>
<dbReference type="InterPro" id="IPR002136">
    <property type="entry name" value="Ribosomal_uL4"/>
</dbReference>
<dbReference type="InterPro" id="IPR013005">
    <property type="entry name" value="Ribosomal_uL4-like"/>
</dbReference>
<dbReference type="InterPro" id="IPR023574">
    <property type="entry name" value="Ribosomal_uL4_dom_sf"/>
</dbReference>
<dbReference type="NCBIfam" id="TIGR03953">
    <property type="entry name" value="rplD_bact"/>
    <property type="match status" value="1"/>
</dbReference>
<dbReference type="PANTHER" id="PTHR10746">
    <property type="entry name" value="50S RIBOSOMAL PROTEIN L4"/>
    <property type="match status" value="1"/>
</dbReference>
<dbReference type="PANTHER" id="PTHR10746:SF6">
    <property type="entry name" value="LARGE RIBOSOMAL SUBUNIT PROTEIN UL4M"/>
    <property type="match status" value="1"/>
</dbReference>
<dbReference type="Pfam" id="PF00573">
    <property type="entry name" value="Ribosomal_L4"/>
    <property type="match status" value="1"/>
</dbReference>
<dbReference type="SUPFAM" id="SSF52166">
    <property type="entry name" value="Ribosomal protein L4"/>
    <property type="match status" value="1"/>
</dbReference>
<evidence type="ECO:0000255" key="1">
    <source>
        <dbReference type="HAMAP-Rule" id="MF_01328"/>
    </source>
</evidence>
<evidence type="ECO:0000256" key="2">
    <source>
        <dbReference type="SAM" id="MobiDB-lite"/>
    </source>
</evidence>
<evidence type="ECO:0000305" key="3"/>
<name>RL4_ENT38</name>
<organism>
    <name type="scientific">Enterobacter sp. (strain 638)</name>
    <dbReference type="NCBI Taxonomy" id="399742"/>
    <lineage>
        <taxon>Bacteria</taxon>
        <taxon>Pseudomonadati</taxon>
        <taxon>Pseudomonadota</taxon>
        <taxon>Gammaproteobacteria</taxon>
        <taxon>Enterobacterales</taxon>
        <taxon>Enterobacteriaceae</taxon>
        <taxon>Enterobacter</taxon>
    </lineage>
</organism>